<feature type="chain" id="PRO_0000349310" description="Zinc finger protein 507">
    <location>
        <begin position="1"/>
        <end position="953"/>
    </location>
</feature>
<feature type="zinc finger region" description="C2H2-type 1" evidence="2">
    <location>
        <begin position="125"/>
        <end position="147"/>
    </location>
</feature>
<feature type="zinc finger region" description="C2H2-type 2" evidence="2">
    <location>
        <begin position="155"/>
        <end position="185"/>
    </location>
</feature>
<feature type="zinc finger region" description="C2H2-type 3" evidence="2">
    <location>
        <begin position="248"/>
        <end position="270"/>
    </location>
</feature>
<feature type="zinc finger region" description="C2H2-type 4" evidence="2">
    <location>
        <begin position="641"/>
        <end position="663"/>
    </location>
</feature>
<feature type="zinc finger region" description="C2H2-type 5" evidence="2">
    <location>
        <begin position="669"/>
        <end position="691"/>
    </location>
</feature>
<feature type="zinc finger region" description="C2H2-type 6" evidence="2">
    <location>
        <begin position="697"/>
        <end position="720"/>
    </location>
</feature>
<feature type="zinc finger region" description="C2H2-type 7" evidence="2">
    <location>
        <begin position="758"/>
        <end position="780"/>
    </location>
</feature>
<feature type="zinc finger region" description="C2H2-type 8" evidence="2">
    <location>
        <begin position="786"/>
        <end position="808"/>
    </location>
</feature>
<feature type="zinc finger region" description="C2H2-type 9" evidence="2">
    <location>
        <begin position="911"/>
        <end position="933"/>
    </location>
</feature>
<feature type="region of interest" description="Disordered" evidence="3">
    <location>
        <begin position="470"/>
        <end position="489"/>
    </location>
</feature>
<feature type="region of interest" description="Disordered" evidence="3">
    <location>
        <begin position="831"/>
        <end position="891"/>
    </location>
</feature>
<feature type="compositionally biased region" description="Polar residues" evidence="3">
    <location>
        <begin position="854"/>
        <end position="891"/>
    </location>
</feature>
<feature type="modified residue" description="Phosphoserine" evidence="1">
    <location>
        <position position="95"/>
    </location>
</feature>
<feature type="modified residue" description="Phosphoserine" evidence="1">
    <location>
        <position position="427"/>
    </location>
</feature>
<dbReference type="EMBL" id="CR857847">
    <property type="protein sequence ID" value="CAH90101.1"/>
    <property type="molecule type" value="mRNA"/>
</dbReference>
<dbReference type="RefSeq" id="NP_001125007.1">
    <property type="nucleotide sequence ID" value="NM_001131535.1"/>
</dbReference>
<dbReference type="FunCoup" id="Q5RDQ6">
    <property type="interactions" value="3857"/>
</dbReference>
<dbReference type="STRING" id="9601.ENSPPYP00000011847"/>
<dbReference type="GeneID" id="100171886"/>
<dbReference type="KEGG" id="pon:100171886"/>
<dbReference type="CTD" id="22847"/>
<dbReference type="eggNOG" id="KOG1721">
    <property type="taxonomic scope" value="Eukaryota"/>
</dbReference>
<dbReference type="InParanoid" id="Q5RDQ6"/>
<dbReference type="OrthoDB" id="10066771at2759"/>
<dbReference type="Proteomes" id="UP000001595">
    <property type="component" value="Unplaced"/>
</dbReference>
<dbReference type="GO" id="GO:0005634">
    <property type="term" value="C:nucleus"/>
    <property type="evidence" value="ECO:0007669"/>
    <property type="project" value="UniProtKB-SubCell"/>
</dbReference>
<dbReference type="GO" id="GO:0003677">
    <property type="term" value="F:DNA binding"/>
    <property type="evidence" value="ECO:0007669"/>
    <property type="project" value="UniProtKB-KW"/>
</dbReference>
<dbReference type="GO" id="GO:0008270">
    <property type="term" value="F:zinc ion binding"/>
    <property type="evidence" value="ECO:0007669"/>
    <property type="project" value="UniProtKB-KW"/>
</dbReference>
<dbReference type="GO" id="GO:0045944">
    <property type="term" value="P:positive regulation of transcription by RNA polymerase II"/>
    <property type="evidence" value="ECO:0007669"/>
    <property type="project" value="TreeGrafter"/>
</dbReference>
<dbReference type="FunFam" id="3.30.160.60:FF:000719">
    <property type="entry name" value="Zinc finger protein 507"/>
    <property type="match status" value="1"/>
</dbReference>
<dbReference type="FunFam" id="3.30.160.60:FF:000884">
    <property type="entry name" value="Zinc finger protein 507"/>
    <property type="match status" value="1"/>
</dbReference>
<dbReference type="FunFam" id="3.30.160.60:FF:000964">
    <property type="entry name" value="zinc finger protein 507"/>
    <property type="match status" value="1"/>
</dbReference>
<dbReference type="Gene3D" id="3.30.160.60">
    <property type="entry name" value="Classic Zinc Finger"/>
    <property type="match status" value="3"/>
</dbReference>
<dbReference type="InterPro" id="IPR050688">
    <property type="entry name" value="Zinc_finger/UBP_domain"/>
</dbReference>
<dbReference type="InterPro" id="IPR036236">
    <property type="entry name" value="Znf_C2H2_sf"/>
</dbReference>
<dbReference type="InterPro" id="IPR013087">
    <property type="entry name" value="Znf_C2H2_type"/>
</dbReference>
<dbReference type="PANTHER" id="PTHR24403">
    <property type="entry name" value="ZINC FINGER PROTEIN"/>
    <property type="match status" value="1"/>
</dbReference>
<dbReference type="PANTHER" id="PTHR24403:SF74">
    <property type="entry name" value="ZINC FINGER PROTEIN 507"/>
    <property type="match status" value="1"/>
</dbReference>
<dbReference type="Pfam" id="PF00096">
    <property type="entry name" value="zf-C2H2"/>
    <property type="match status" value="1"/>
</dbReference>
<dbReference type="SMART" id="SM00355">
    <property type="entry name" value="ZnF_C2H2"/>
    <property type="match status" value="9"/>
</dbReference>
<dbReference type="SUPFAM" id="SSF57667">
    <property type="entry name" value="beta-beta-alpha zinc fingers"/>
    <property type="match status" value="3"/>
</dbReference>
<dbReference type="PROSITE" id="PS00028">
    <property type="entry name" value="ZINC_FINGER_C2H2_1"/>
    <property type="match status" value="3"/>
</dbReference>
<dbReference type="PROSITE" id="PS50157">
    <property type="entry name" value="ZINC_FINGER_C2H2_2"/>
    <property type="match status" value="5"/>
</dbReference>
<keyword id="KW-0238">DNA-binding</keyword>
<keyword id="KW-0479">Metal-binding</keyword>
<keyword id="KW-0539">Nucleus</keyword>
<keyword id="KW-0597">Phosphoprotein</keyword>
<keyword id="KW-1185">Reference proteome</keyword>
<keyword id="KW-0677">Repeat</keyword>
<keyword id="KW-0804">Transcription</keyword>
<keyword id="KW-0805">Transcription regulation</keyword>
<keyword id="KW-0862">Zinc</keyword>
<keyword id="KW-0863">Zinc-finger</keyword>
<name>ZN507_PONAB</name>
<protein>
    <recommendedName>
        <fullName>Zinc finger protein 507</fullName>
    </recommendedName>
</protein>
<accession>Q5RDQ6</accession>
<proteinExistence type="evidence at transcript level"/>
<comment type="function">
    <text>May be involved in transcriptional regulation.</text>
</comment>
<comment type="subcellular location">
    <subcellularLocation>
        <location evidence="4">Nucleus</location>
    </subcellularLocation>
</comment>
<comment type="similarity">
    <text evidence="4">Belongs to the krueppel C2H2-type zinc-finger protein family.</text>
</comment>
<reference key="1">
    <citation type="submission" date="2004-11" db="EMBL/GenBank/DDBJ databases">
        <authorList>
            <consortium name="The German cDNA consortium"/>
        </authorList>
    </citation>
    <scope>NUCLEOTIDE SEQUENCE [LARGE SCALE MRNA]</scope>
    <source>
        <tissue>Kidney</tissue>
    </source>
</reference>
<sequence length="953" mass="105600">MEESSSVAMLLPDIGEQEAILTAESIISPSLEIDEQRKTKPDPLIHVIQKLSKIVENEKSQKCPLIGKKRPHSSAATHSLETQELCEIPAKVTQSPAAVTRRAEMSQTNFTPDTLAQNEGKAMSYQCSLCKFLSSSFSVLKDHIKQHGQQNEVILMCSECHITSRSQEELEAHVVNDHDNDANIHTQSKAQQCVSPSSSLCRKTTERNETVPDIPVSVDNLQTHTVQTASVAEMGRRKWYAYEQYGMYRCLFCSYTCGQQRMLKTHAWKHAGEVDCSYPIFENENEPLGLLDSSAAAAPGGVDAVVIAIGDSELSIHNGPSVQVQICSSEQLSSSSPLEQSAERGVHLSQSVTLDPNEEEMLEVISDAEENLIPDSLLTSAQKIISSSPNKKGHVNVIVERLPSAEETLSQKRFLMNTEMEEGKDLSPTEAQIGREGTDDVYRADKCTVDIGGLIIGWSSSEKKDELMNKGLATDENAPPGRRRTNSESLRLHSLAAEALVTMPIRAAELTRANLGHYGDINLLGPDTSQRQVDSTLAAYSKMMSPLKNSSDGLTSLNQSNSTLVALPEGRQELSDGQVKTGISMSLLTVIEKLRERTDQNASDDDILKELQDNAQCQPNSDTSLSGNNVVEYIPNAERPYRCRLCHYTSGNKGYIKQHLRVHRQRQPYQCPICEHIADNSKDLESHMIHHCKTRIYQCKQCEESFHYKSQLRNHEREQHSLPDTLSIATSNEPRISSDTADGKCVQEGNKSSVQKQYRCDVCDYTSTTYVGVRNHRRIHNSDKPYRCSLCGYVCSHPPSLKSHMWKHASDQNYNYEQVNKAINDAISQSGRVLGKTPGKTQLKSSEDSADPITGSSENAVSSSELMSQTPSEVLGTNENEKLSPTSNTSYSLEKISSLAPPSMEYCVLLFCCCICGFESTSKENLLDHMKEHEGEIVNIILNKDHNTALNTN</sequence>
<evidence type="ECO:0000250" key="1">
    <source>
        <dbReference type="UniProtKB" id="Q8TCN5"/>
    </source>
</evidence>
<evidence type="ECO:0000255" key="2">
    <source>
        <dbReference type="PROSITE-ProRule" id="PRU00042"/>
    </source>
</evidence>
<evidence type="ECO:0000256" key="3">
    <source>
        <dbReference type="SAM" id="MobiDB-lite"/>
    </source>
</evidence>
<evidence type="ECO:0000305" key="4"/>
<organism>
    <name type="scientific">Pongo abelii</name>
    <name type="common">Sumatran orangutan</name>
    <name type="synonym">Pongo pygmaeus abelii</name>
    <dbReference type="NCBI Taxonomy" id="9601"/>
    <lineage>
        <taxon>Eukaryota</taxon>
        <taxon>Metazoa</taxon>
        <taxon>Chordata</taxon>
        <taxon>Craniata</taxon>
        <taxon>Vertebrata</taxon>
        <taxon>Euteleostomi</taxon>
        <taxon>Mammalia</taxon>
        <taxon>Eutheria</taxon>
        <taxon>Euarchontoglires</taxon>
        <taxon>Primates</taxon>
        <taxon>Haplorrhini</taxon>
        <taxon>Catarrhini</taxon>
        <taxon>Hominidae</taxon>
        <taxon>Pongo</taxon>
    </lineage>
</organism>
<gene>
    <name type="primary">ZNF507</name>
</gene>